<sequence>MSQEKQVFSIDLAGRQLTVETGQLAKQANGAVLVRYGDTAVLSTATASKEAKNVDFFPLTVNYEERLYAVGKIPGGFIKREGRPSEKAILASRLIDRPIRPLFADGFRNEVQVVNIVMSVDQDCSSEMAAMLGSSLALSISDIPFEGPIAGATVGRINGEFVINPTVEQQEQSDIHLVVAGTKDAINMVEAGADQVPEETMLEAIMFGHDEIKRLIAFQEEIVQAVGKEKSEVKLYEVDADLNQAVREMAEKDMHSAIQVHEKHAREDAINEVKKRVIEHYEAQEADADTLGQVNEILYKIVKEEVRRLITVEKIRPDGRKGDEIRPLASEVGILSRTHGSGLFTRGQTQALSICTLGALGDVQILDGLGVEESKRFMHHYNFPSFSVGETRPMRGPGRREIGHGALGERALEPVIPSEKDFPYTVRLVSEVLESNGSTSQASICGSTLAMMDAGVPLKAPVAGIAMGLVKTGEHYTILSDIQGMEDHLGDMDFKVAGTAHGVTALQMDIKIDGLSREILEEALQQAKVGRVHILNHMLSVIAEPRTELSAYAPKIITMTINPDKIRDVIGPSGKQINKIIEETGVKIDIEQDGTVFISSINQEMNDKAKKIIEDIVREVQVGEIYEGKVKRVEKFGAFVELFSGKDGLVHISELALERVGKVEDVVKIGDVITVKVIEIDKQGRVNLSRKVLLKEEQEKEAAKEENKQEQQ</sequence>
<keyword id="KW-0963">Cytoplasm</keyword>
<keyword id="KW-0460">Magnesium</keyword>
<keyword id="KW-0479">Metal-binding</keyword>
<keyword id="KW-0548">Nucleotidyltransferase</keyword>
<keyword id="KW-1185">Reference proteome</keyword>
<keyword id="KW-0694">RNA-binding</keyword>
<keyword id="KW-0808">Transferase</keyword>
<evidence type="ECO:0000255" key="1">
    <source>
        <dbReference type="HAMAP-Rule" id="MF_01595"/>
    </source>
</evidence>
<name>PNP_BACAN</name>
<protein>
    <recommendedName>
        <fullName evidence="1">Polyribonucleotide nucleotidyltransferase</fullName>
        <ecNumber evidence="1">2.7.7.8</ecNumber>
    </recommendedName>
    <alternativeName>
        <fullName evidence="1">Polynucleotide phosphorylase</fullName>
        <shortName evidence="1">PNPase</shortName>
    </alternativeName>
</protein>
<feature type="chain" id="PRO_0000329511" description="Polyribonucleotide nucleotidyltransferase">
    <location>
        <begin position="1"/>
        <end position="712"/>
    </location>
</feature>
<feature type="domain" description="KH" evidence="1">
    <location>
        <begin position="554"/>
        <end position="613"/>
    </location>
</feature>
<feature type="domain" description="S1 motif" evidence="1">
    <location>
        <begin position="623"/>
        <end position="691"/>
    </location>
</feature>
<feature type="binding site" evidence="1">
    <location>
        <position position="487"/>
    </location>
    <ligand>
        <name>Mg(2+)</name>
        <dbReference type="ChEBI" id="CHEBI:18420"/>
    </ligand>
</feature>
<feature type="binding site" evidence="1">
    <location>
        <position position="493"/>
    </location>
    <ligand>
        <name>Mg(2+)</name>
        <dbReference type="ChEBI" id="CHEBI:18420"/>
    </ligand>
</feature>
<organism>
    <name type="scientific">Bacillus anthracis</name>
    <dbReference type="NCBI Taxonomy" id="1392"/>
    <lineage>
        <taxon>Bacteria</taxon>
        <taxon>Bacillati</taxon>
        <taxon>Bacillota</taxon>
        <taxon>Bacilli</taxon>
        <taxon>Bacillales</taxon>
        <taxon>Bacillaceae</taxon>
        <taxon>Bacillus</taxon>
        <taxon>Bacillus cereus group</taxon>
    </lineage>
</organism>
<accession>Q81WM8</accession>
<accession>Q6HUS9</accession>
<accession>Q6KP10</accession>
<reference key="1">
    <citation type="journal article" date="2003" name="Nature">
        <title>The genome sequence of Bacillus anthracis Ames and comparison to closely related bacteria.</title>
        <authorList>
            <person name="Read T.D."/>
            <person name="Peterson S.N."/>
            <person name="Tourasse N.J."/>
            <person name="Baillie L.W."/>
            <person name="Paulsen I.T."/>
            <person name="Nelson K.E."/>
            <person name="Tettelin H."/>
            <person name="Fouts D.E."/>
            <person name="Eisen J.A."/>
            <person name="Gill S.R."/>
            <person name="Holtzapple E.K."/>
            <person name="Okstad O.A."/>
            <person name="Helgason E."/>
            <person name="Rilstone J."/>
            <person name="Wu M."/>
            <person name="Kolonay J.F."/>
            <person name="Beanan M.J."/>
            <person name="Dodson R.J."/>
            <person name="Brinkac L.M."/>
            <person name="Gwinn M.L."/>
            <person name="DeBoy R.T."/>
            <person name="Madpu R."/>
            <person name="Daugherty S.C."/>
            <person name="Durkin A.S."/>
            <person name="Haft D.H."/>
            <person name="Nelson W.C."/>
            <person name="Peterson J.D."/>
            <person name="Pop M."/>
            <person name="Khouri H.M."/>
            <person name="Radune D."/>
            <person name="Benton J.L."/>
            <person name="Mahamoud Y."/>
            <person name="Jiang L."/>
            <person name="Hance I.R."/>
            <person name="Weidman J.F."/>
            <person name="Berry K.J."/>
            <person name="Plaut R.D."/>
            <person name="Wolf A.M."/>
            <person name="Watkins K.L."/>
            <person name="Nierman W.C."/>
            <person name="Hazen A."/>
            <person name="Cline R.T."/>
            <person name="Redmond C."/>
            <person name="Thwaite J.E."/>
            <person name="White O."/>
            <person name="Salzberg S.L."/>
            <person name="Thomason B."/>
            <person name="Friedlander A.M."/>
            <person name="Koehler T.M."/>
            <person name="Hanna P.C."/>
            <person name="Kolstoe A.-B."/>
            <person name="Fraser C.M."/>
        </authorList>
    </citation>
    <scope>NUCLEOTIDE SEQUENCE [LARGE SCALE GENOMIC DNA]</scope>
    <source>
        <strain>Ames / isolate Porton</strain>
    </source>
</reference>
<reference key="2">
    <citation type="submission" date="2004-01" db="EMBL/GenBank/DDBJ databases">
        <title>Complete genome sequence of Bacillus anthracis Sterne.</title>
        <authorList>
            <person name="Brettin T.S."/>
            <person name="Bruce D."/>
            <person name="Challacombe J.F."/>
            <person name="Gilna P."/>
            <person name="Han C."/>
            <person name="Hill K."/>
            <person name="Hitchcock P."/>
            <person name="Jackson P."/>
            <person name="Keim P."/>
            <person name="Longmire J."/>
            <person name="Lucas S."/>
            <person name="Okinaka R."/>
            <person name="Richardson P."/>
            <person name="Rubin E."/>
            <person name="Tice H."/>
        </authorList>
    </citation>
    <scope>NUCLEOTIDE SEQUENCE [LARGE SCALE GENOMIC DNA]</scope>
    <source>
        <strain>Sterne</strain>
    </source>
</reference>
<reference key="3">
    <citation type="journal article" date="2009" name="J. Bacteriol.">
        <title>The complete genome sequence of Bacillus anthracis Ames 'Ancestor'.</title>
        <authorList>
            <person name="Ravel J."/>
            <person name="Jiang L."/>
            <person name="Stanley S.T."/>
            <person name="Wilson M.R."/>
            <person name="Decker R.S."/>
            <person name="Read T.D."/>
            <person name="Worsham P."/>
            <person name="Keim P.S."/>
            <person name="Salzberg S.L."/>
            <person name="Fraser-Liggett C.M."/>
            <person name="Rasko D.A."/>
        </authorList>
    </citation>
    <scope>NUCLEOTIDE SEQUENCE [LARGE SCALE GENOMIC DNA]</scope>
    <source>
        <strain>Ames ancestor</strain>
    </source>
</reference>
<dbReference type="EC" id="2.7.7.8" evidence="1"/>
<dbReference type="EMBL" id="AE016879">
    <property type="protein sequence ID" value="AAP27674.1"/>
    <property type="molecule type" value="Genomic_DNA"/>
</dbReference>
<dbReference type="EMBL" id="AE017334">
    <property type="protein sequence ID" value="AAT33058.1"/>
    <property type="molecule type" value="Genomic_DNA"/>
</dbReference>
<dbReference type="EMBL" id="AE017225">
    <property type="protein sequence ID" value="AAT55960.1"/>
    <property type="molecule type" value="Genomic_DNA"/>
</dbReference>
<dbReference type="RefSeq" id="NP_846188.1">
    <property type="nucleotide sequence ID" value="NC_003997.3"/>
</dbReference>
<dbReference type="RefSeq" id="WP_000076733.1">
    <property type="nucleotide sequence ID" value="NZ_WXXJ01000026.1"/>
</dbReference>
<dbReference type="RefSeq" id="YP_029909.1">
    <property type="nucleotide sequence ID" value="NC_005945.1"/>
</dbReference>
<dbReference type="SMR" id="Q81WM8"/>
<dbReference type="IntAct" id="Q81WM8">
    <property type="interactions" value="2"/>
</dbReference>
<dbReference type="STRING" id="261594.GBAA_3944"/>
<dbReference type="DNASU" id="1086877"/>
<dbReference type="GeneID" id="45023635"/>
<dbReference type="KEGG" id="ban:BA_3944"/>
<dbReference type="KEGG" id="bar:GBAA_3944"/>
<dbReference type="KEGG" id="bat:BAS3658"/>
<dbReference type="PATRIC" id="fig|198094.11.peg.3914"/>
<dbReference type="eggNOG" id="COG1185">
    <property type="taxonomic scope" value="Bacteria"/>
</dbReference>
<dbReference type="HOGENOM" id="CLU_004217_2_2_9"/>
<dbReference type="OMA" id="RFMFHYN"/>
<dbReference type="OrthoDB" id="9804305at2"/>
<dbReference type="Proteomes" id="UP000000427">
    <property type="component" value="Chromosome"/>
</dbReference>
<dbReference type="Proteomes" id="UP000000594">
    <property type="component" value="Chromosome"/>
</dbReference>
<dbReference type="GO" id="GO:0005829">
    <property type="term" value="C:cytosol"/>
    <property type="evidence" value="ECO:0007669"/>
    <property type="project" value="TreeGrafter"/>
</dbReference>
<dbReference type="GO" id="GO:0000175">
    <property type="term" value="F:3'-5'-RNA exonuclease activity"/>
    <property type="evidence" value="ECO:0007669"/>
    <property type="project" value="TreeGrafter"/>
</dbReference>
<dbReference type="GO" id="GO:0000287">
    <property type="term" value="F:magnesium ion binding"/>
    <property type="evidence" value="ECO:0007669"/>
    <property type="project" value="UniProtKB-UniRule"/>
</dbReference>
<dbReference type="GO" id="GO:0004654">
    <property type="term" value="F:polyribonucleotide nucleotidyltransferase activity"/>
    <property type="evidence" value="ECO:0007669"/>
    <property type="project" value="UniProtKB-UniRule"/>
</dbReference>
<dbReference type="GO" id="GO:0003723">
    <property type="term" value="F:RNA binding"/>
    <property type="evidence" value="ECO:0007669"/>
    <property type="project" value="UniProtKB-UniRule"/>
</dbReference>
<dbReference type="GO" id="GO:0006402">
    <property type="term" value="P:mRNA catabolic process"/>
    <property type="evidence" value="ECO:0007669"/>
    <property type="project" value="UniProtKB-UniRule"/>
</dbReference>
<dbReference type="GO" id="GO:0006396">
    <property type="term" value="P:RNA processing"/>
    <property type="evidence" value="ECO:0007669"/>
    <property type="project" value="InterPro"/>
</dbReference>
<dbReference type="CDD" id="cd02393">
    <property type="entry name" value="KH-I_PNPase"/>
    <property type="match status" value="1"/>
</dbReference>
<dbReference type="CDD" id="cd11363">
    <property type="entry name" value="RNase_PH_PNPase_1"/>
    <property type="match status" value="1"/>
</dbReference>
<dbReference type="CDD" id="cd11364">
    <property type="entry name" value="RNase_PH_PNPase_2"/>
    <property type="match status" value="1"/>
</dbReference>
<dbReference type="CDD" id="cd04472">
    <property type="entry name" value="S1_PNPase"/>
    <property type="match status" value="1"/>
</dbReference>
<dbReference type="FunFam" id="2.40.50.140:FF:000023">
    <property type="entry name" value="Polyribonucleotide nucleotidyltransferase"/>
    <property type="match status" value="1"/>
</dbReference>
<dbReference type="FunFam" id="3.30.1370.10:FF:000001">
    <property type="entry name" value="Polyribonucleotide nucleotidyltransferase"/>
    <property type="match status" value="1"/>
</dbReference>
<dbReference type="FunFam" id="3.30.230.70:FF:000001">
    <property type="entry name" value="Polyribonucleotide nucleotidyltransferase"/>
    <property type="match status" value="1"/>
</dbReference>
<dbReference type="FunFam" id="3.30.230.70:FF:000002">
    <property type="entry name" value="Polyribonucleotide nucleotidyltransferase"/>
    <property type="match status" value="1"/>
</dbReference>
<dbReference type="Gene3D" id="3.30.230.70">
    <property type="entry name" value="GHMP Kinase, N-terminal domain"/>
    <property type="match status" value="2"/>
</dbReference>
<dbReference type="Gene3D" id="3.30.1370.10">
    <property type="entry name" value="K Homology domain, type 1"/>
    <property type="match status" value="1"/>
</dbReference>
<dbReference type="Gene3D" id="2.40.50.140">
    <property type="entry name" value="Nucleic acid-binding proteins"/>
    <property type="match status" value="1"/>
</dbReference>
<dbReference type="HAMAP" id="MF_01595">
    <property type="entry name" value="PNPase"/>
    <property type="match status" value="1"/>
</dbReference>
<dbReference type="InterPro" id="IPR001247">
    <property type="entry name" value="ExoRNase_PH_dom1"/>
</dbReference>
<dbReference type="InterPro" id="IPR015847">
    <property type="entry name" value="ExoRNase_PH_dom2"/>
</dbReference>
<dbReference type="InterPro" id="IPR036345">
    <property type="entry name" value="ExoRNase_PH_dom2_sf"/>
</dbReference>
<dbReference type="InterPro" id="IPR004087">
    <property type="entry name" value="KH_dom"/>
</dbReference>
<dbReference type="InterPro" id="IPR004088">
    <property type="entry name" value="KH_dom_type_1"/>
</dbReference>
<dbReference type="InterPro" id="IPR036612">
    <property type="entry name" value="KH_dom_type_1_sf"/>
</dbReference>
<dbReference type="InterPro" id="IPR012340">
    <property type="entry name" value="NA-bd_OB-fold"/>
</dbReference>
<dbReference type="InterPro" id="IPR012162">
    <property type="entry name" value="PNPase"/>
</dbReference>
<dbReference type="InterPro" id="IPR027408">
    <property type="entry name" value="PNPase/RNase_PH_dom_sf"/>
</dbReference>
<dbReference type="InterPro" id="IPR015848">
    <property type="entry name" value="PNPase_PH_RNA-bd_bac/org-type"/>
</dbReference>
<dbReference type="InterPro" id="IPR020568">
    <property type="entry name" value="Ribosomal_Su5_D2-typ_SF"/>
</dbReference>
<dbReference type="InterPro" id="IPR003029">
    <property type="entry name" value="S1_domain"/>
</dbReference>
<dbReference type="NCBIfam" id="TIGR03591">
    <property type="entry name" value="polynuc_phos"/>
    <property type="match status" value="1"/>
</dbReference>
<dbReference type="NCBIfam" id="NF008805">
    <property type="entry name" value="PRK11824.1"/>
    <property type="match status" value="1"/>
</dbReference>
<dbReference type="PANTHER" id="PTHR11252">
    <property type="entry name" value="POLYRIBONUCLEOTIDE NUCLEOTIDYLTRANSFERASE"/>
    <property type="match status" value="1"/>
</dbReference>
<dbReference type="PANTHER" id="PTHR11252:SF0">
    <property type="entry name" value="POLYRIBONUCLEOTIDE NUCLEOTIDYLTRANSFERASE 1, MITOCHONDRIAL"/>
    <property type="match status" value="1"/>
</dbReference>
<dbReference type="Pfam" id="PF00013">
    <property type="entry name" value="KH_1"/>
    <property type="match status" value="1"/>
</dbReference>
<dbReference type="Pfam" id="PF03726">
    <property type="entry name" value="PNPase"/>
    <property type="match status" value="1"/>
</dbReference>
<dbReference type="Pfam" id="PF01138">
    <property type="entry name" value="RNase_PH"/>
    <property type="match status" value="2"/>
</dbReference>
<dbReference type="Pfam" id="PF03725">
    <property type="entry name" value="RNase_PH_C"/>
    <property type="match status" value="2"/>
</dbReference>
<dbReference type="Pfam" id="PF00575">
    <property type="entry name" value="S1"/>
    <property type="match status" value="1"/>
</dbReference>
<dbReference type="PIRSF" id="PIRSF005499">
    <property type="entry name" value="PNPase"/>
    <property type="match status" value="1"/>
</dbReference>
<dbReference type="SMART" id="SM00322">
    <property type="entry name" value="KH"/>
    <property type="match status" value="1"/>
</dbReference>
<dbReference type="SMART" id="SM00316">
    <property type="entry name" value="S1"/>
    <property type="match status" value="1"/>
</dbReference>
<dbReference type="SUPFAM" id="SSF54791">
    <property type="entry name" value="Eukaryotic type KH-domain (KH-domain type I)"/>
    <property type="match status" value="1"/>
</dbReference>
<dbReference type="SUPFAM" id="SSF50249">
    <property type="entry name" value="Nucleic acid-binding proteins"/>
    <property type="match status" value="1"/>
</dbReference>
<dbReference type="SUPFAM" id="SSF55666">
    <property type="entry name" value="Ribonuclease PH domain 2-like"/>
    <property type="match status" value="2"/>
</dbReference>
<dbReference type="SUPFAM" id="SSF54211">
    <property type="entry name" value="Ribosomal protein S5 domain 2-like"/>
    <property type="match status" value="2"/>
</dbReference>
<dbReference type="PROSITE" id="PS50084">
    <property type="entry name" value="KH_TYPE_1"/>
    <property type="match status" value="1"/>
</dbReference>
<dbReference type="PROSITE" id="PS50126">
    <property type="entry name" value="S1"/>
    <property type="match status" value="1"/>
</dbReference>
<comment type="function">
    <text evidence="1">Involved in mRNA degradation. Catalyzes the phosphorolysis of single-stranded polyribonucleotides processively in the 3'- to 5'-direction.</text>
</comment>
<comment type="catalytic activity">
    <reaction evidence="1">
        <text>RNA(n+1) + phosphate = RNA(n) + a ribonucleoside 5'-diphosphate</text>
        <dbReference type="Rhea" id="RHEA:22096"/>
        <dbReference type="Rhea" id="RHEA-COMP:14527"/>
        <dbReference type="Rhea" id="RHEA-COMP:17342"/>
        <dbReference type="ChEBI" id="CHEBI:43474"/>
        <dbReference type="ChEBI" id="CHEBI:57930"/>
        <dbReference type="ChEBI" id="CHEBI:140395"/>
        <dbReference type="EC" id="2.7.7.8"/>
    </reaction>
</comment>
<comment type="cofactor">
    <cofactor evidence="1">
        <name>Mg(2+)</name>
        <dbReference type="ChEBI" id="CHEBI:18420"/>
    </cofactor>
</comment>
<comment type="subcellular location">
    <subcellularLocation>
        <location evidence="1">Cytoplasm</location>
    </subcellularLocation>
</comment>
<comment type="similarity">
    <text evidence="1">Belongs to the polyribonucleotide nucleotidyltransferase family.</text>
</comment>
<proteinExistence type="inferred from homology"/>
<gene>
    <name evidence="1" type="primary">pnp</name>
    <name type="ordered locus">BA_3944</name>
    <name type="ordered locus">GBAA_3944</name>
    <name type="ordered locus">BAS3658</name>
</gene>